<organism>
    <name type="scientific">Desulfovibrio desulfuricans (strain ATCC 27774 / DSM 6949 / MB)</name>
    <dbReference type="NCBI Taxonomy" id="525146"/>
    <lineage>
        <taxon>Bacteria</taxon>
        <taxon>Pseudomonadati</taxon>
        <taxon>Thermodesulfobacteriota</taxon>
        <taxon>Desulfovibrionia</taxon>
        <taxon>Desulfovibrionales</taxon>
        <taxon>Desulfovibrionaceae</taxon>
        <taxon>Desulfovibrio</taxon>
    </lineage>
</organism>
<reference key="1">
    <citation type="submission" date="2009-01" db="EMBL/GenBank/DDBJ databases">
        <title>Complete sequence of Desulfovibrio desulfuricans subsp. desulfuricans str. ATCC 27774.</title>
        <authorList>
            <consortium name="US DOE Joint Genome Institute"/>
            <person name="Lucas S."/>
            <person name="Copeland A."/>
            <person name="Lapidus A."/>
            <person name="Glavina del Rio T."/>
            <person name="Tice H."/>
            <person name="Bruce D."/>
            <person name="Goodwin L."/>
            <person name="Pitluck S."/>
            <person name="Sims D."/>
            <person name="Lu M."/>
            <person name="Kiss H."/>
            <person name="Meineke L."/>
            <person name="Brettin T."/>
            <person name="Detter J.C."/>
            <person name="Han C."/>
            <person name="Larimer F."/>
            <person name="Land M."/>
            <person name="Hauser L."/>
            <person name="Kyrpides N."/>
            <person name="Ovchinnikova G."/>
            <person name="Hazen T.C."/>
        </authorList>
    </citation>
    <scope>NUCLEOTIDE SEQUENCE [LARGE SCALE GENOMIC DNA]</scope>
    <source>
        <strain>ATCC 27774 / DSM 6949 / MB</strain>
    </source>
</reference>
<accession>B8J2T3</accession>
<proteinExistence type="inferred from homology"/>
<gene>
    <name evidence="1" type="primary">adk</name>
    <name type="ordered locus">Ddes_1956</name>
</gene>
<comment type="function">
    <text evidence="1">Catalyzes the reversible transfer of the terminal phosphate group between ATP and AMP. Plays an important role in cellular energy homeostasis and in adenine nucleotide metabolism.</text>
</comment>
<comment type="catalytic activity">
    <reaction evidence="1">
        <text>AMP + ATP = 2 ADP</text>
        <dbReference type="Rhea" id="RHEA:12973"/>
        <dbReference type="ChEBI" id="CHEBI:30616"/>
        <dbReference type="ChEBI" id="CHEBI:456215"/>
        <dbReference type="ChEBI" id="CHEBI:456216"/>
        <dbReference type="EC" id="2.7.4.3"/>
    </reaction>
</comment>
<comment type="pathway">
    <text evidence="1">Purine metabolism; AMP biosynthesis via salvage pathway; AMP from ADP: step 1/1.</text>
</comment>
<comment type="subunit">
    <text evidence="1">Monomer.</text>
</comment>
<comment type="subcellular location">
    <subcellularLocation>
        <location evidence="1">Cytoplasm</location>
    </subcellularLocation>
</comment>
<comment type="domain">
    <text evidence="1">Consists of three domains, a large central CORE domain and two small peripheral domains, NMPbind and LID, which undergo movements during catalysis. The LID domain closes over the site of phosphoryl transfer upon ATP binding. Assembling and dissambling the active center during each catalytic cycle provides an effective means to prevent ATP hydrolysis.</text>
</comment>
<comment type="similarity">
    <text evidence="1">Belongs to the adenylate kinase family.</text>
</comment>
<feature type="chain" id="PRO_1000191138" description="Adenylate kinase">
    <location>
        <begin position="1"/>
        <end position="223"/>
    </location>
</feature>
<feature type="region of interest" description="NMP" evidence="1">
    <location>
        <begin position="30"/>
        <end position="59"/>
    </location>
</feature>
<feature type="region of interest" description="LID" evidence="1">
    <location>
        <begin position="125"/>
        <end position="164"/>
    </location>
</feature>
<feature type="binding site" evidence="1">
    <location>
        <begin position="10"/>
        <end position="15"/>
    </location>
    <ligand>
        <name>ATP</name>
        <dbReference type="ChEBI" id="CHEBI:30616"/>
    </ligand>
</feature>
<feature type="binding site" evidence="1">
    <location>
        <position position="31"/>
    </location>
    <ligand>
        <name>AMP</name>
        <dbReference type="ChEBI" id="CHEBI:456215"/>
    </ligand>
</feature>
<feature type="binding site" evidence="1">
    <location>
        <position position="36"/>
    </location>
    <ligand>
        <name>AMP</name>
        <dbReference type="ChEBI" id="CHEBI:456215"/>
    </ligand>
</feature>
<feature type="binding site" evidence="1">
    <location>
        <begin position="57"/>
        <end position="59"/>
    </location>
    <ligand>
        <name>AMP</name>
        <dbReference type="ChEBI" id="CHEBI:456215"/>
    </ligand>
</feature>
<feature type="binding site" evidence="1">
    <location>
        <begin position="84"/>
        <end position="87"/>
    </location>
    <ligand>
        <name>AMP</name>
        <dbReference type="ChEBI" id="CHEBI:456215"/>
    </ligand>
</feature>
<feature type="binding site" evidence="1">
    <location>
        <position position="91"/>
    </location>
    <ligand>
        <name>AMP</name>
        <dbReference type="ChEBI" id="CHEBI:456215"/>
    </ligand>
</feature>
<feature type="binding site" evidence="1">
    <location>
        <position position="126"/>
    </location>
    <ligand>
        <name>ATP</name>
        <dbReference type="ChEBI" id="CHEBI:30616"/>
    </ligand>
</feature>
<feature type="binding site" evidence="1">
    <location>
        <position position="161"/>
    </location>
    <ligand>
        <name>AMP</name>
        <dbReference type="ChEBI" id="CHEBI:456215"/>
    </ligand>
</feature>
<feature type="binding site" evidence="1">
    <location>
        <position position="173"/>
    </location>
    <ligand>
        <name>AMP</name>
        <dbReference type="ChEBI" id="CHEBI:456215"/>
    </ligand>
</feature>
<feature type="binding site" evidence="1">
    <location>
        <position position="209"/>
    </location>
    <ligand>
        <name>ATP</name>
        <dbReference type="ChEBI" id="CHEBI:30616"/>
    </ligand>
</feature>
<keyword id="KW-0067">ATP-binding</keyword>
<keyword id="KW-0963">Cytoplasm</keyword>
<keyword id="KW-0418">Kinase</keyword>
<keyword id="KW-0545">Nucleotide biosynthesis</keyword>
<keyword id="KW-0547">Nucleotide-binding</keyword>
<keyword id="KW-0808">Transferase</keyword>
<evidence type="ECO:0000255" key="1">
    <source>
        <dbReference type="HAMAP-Rule" id="MF_00235"/>
    </source>
</evidence>
<protein>
    <recommendedName>
        <fullName evidence="1">Adenylate kinase</fullName>
        <shortName evidence="1">AK</shortName>
        <ecNumber evidence="1">2.7.4.3</ecNumber>
    </recommendedName>
    <alternativeName>
        <fullName evidence="1">ATP-AMP transphosphorylase</fullName>
    </alternativeName>
    <alternativeName>
        <fullName evidence="1">ATP:AMP phosphotransferase</fullName>
    </alternativeName>
    <alternativeName>
        <fullName evidence="1">Adenylate monophosphate kinase</fullName>
    </alternativeName>
</protein>
<sequence length="223" mass="24850">MNILIFGPNGSGKGTQGDLIKQKYNLAHIESGAIFREHIGGGTELGKKAKAYIDRGDLVPDEITIPMVLETLKTKGQHGWLLDGFPRNMVQAEKLWEALQKEGMRLDYVVEILLPRETAKNRIMGRRLCKNNNNHPNNIFIEAIKPNGDVCRVCGGTLSSRSDDQDETAINKRHDIYYNTTDGTLAAAYFFKKLADQGKTKYIELNGEGSIESIKETLLSKLA</sequence>
<name>KAD_DESDA</name>
<dbReference type="EC" id="2.7.4.3" evidence="1"/>
<dbReference type="EMBL" id="CP001358">
    <property type="protein sequence ID" value="ACL49852.1"/>
    <property type="molecule type" value="Genomic_DNA"/>
</dbReference>
<dbReference type="SMR" id="B8J2T3"/>
<dbReference type="STRING" id="525146.Ddes_1956"/>
<dbReference type="KEGG" id="dds:Ddes_1956"/>
<dbReference type="eggNOG" id="COG0563">
    <property type="taxonomic scope" value="Bacteria"/>
</dbReference>
<dbReference type="HOGENOM" id="CLU_032354_1_2_7"/>
<dbReference type="UniPathway" id="UPA00588">
    <property type="reaction ID" value="UER00649"/>
</dbReference>
<dbReference type="GO" id="GO:0005737">
    <property type="term" value="C:cytoplasm"/>
    <property type="evidence" value="ECO:0007669"/>
    <property type="project" value="UniProtKB-SubCell"/>
</dbReference>
<dbReference type="GO" id="GO:0004017">
    <property type="term" value="F:adenylate kinase activity"/>
    <property type="evidence" value="ECO:0007669"/>
    <property type="project" value="UniProtKB-UniRule"/>
</dbReference>
<dbReference type="GO" id="GO:0005524">
    <property type="term" value="F:ATP binding"/>
    <property type="evidence" value="ECO:0007669"/>
    <property type="project" value="UniProtKB-UniRule"/>
</dbReference>
<dbReference type="GO" id="GO:0044209">
    <property type="term" value="P:AMP salvage"/>
    <property type="evidence" value="ECO:0007669"/>
    <property type="project" value="UniProtKB-UniRule"/>
</dbReference>
<dbReference type="CDD" id="cd01428">
    <property type="entry name" value="ADK"/>
    <property type="match status" value="1"/>
</dbReference>
<dbReference type="Gene3D" id="3.40.50.300">
    <property type="entry name" value="P-loop containing nucleotide triphosphate hydrolases"/>
    <property type="match status" value="1"/>
</dbReference>
<dbReference type="HAMAP" id="MF_00235">
    <property type="entry name" value="Adenylate_kinase_Adk"/>
    <property type="match status" value="1"/>
</dbReference>
<dbReference type="InterPro" id="IPR006259">
    <property type="entry name" value="Adenyl_kin_sub"/>
</dbReference>
<dbReference type="InterPro" id="IPR000850">
    <property type="entry name" value="Adenylat/UMP-CMP_kin"/>
</dbReference>
<dbReference type="InterPro" id="IPR033690">
    <property type="entry name" value="Adenylat_kinase_CS"/>
</dbReference>
<dbReference type="InterPro" id="IPR027417">
    <property type="entry name" value="P-loop_NTPase"/>
</dbReference>
<dbReference type="NCBIfam" id="TIGR01351">
    <property type="entry name" value="adk"/>
    <property type="match status" value="1"/>
</dbReference>
<dbReference type="NCBIfam" id="NF011102">
    <property type="entry name" value="PRK14529.1"/>
    <property type="match status" value="1"/>
</dbReference>
<dbReference type="PANTHER" id="PTHR23359">
    <property type="entry name" value="NUCLEOTIDE KINASE"/>
    <property type="match status" value="1"/>
</dbReference>
<dbReference type="Pfam" id="PF00406">
    <property type="entry name" value="ADK"/>
    <property type="match status" value="1"/>
</dbReference>
<dbReference type="PRINTS" id="PR00094">
    <property type="entry name" value="ADENYLTKNASE"/>
</dbReference>
<dbReference type="SUPFAM" id="SSF52540">
    <property type="entry name" value="P-loop containing nucleoside triphosphate hydrolases"/>
    <property type="match status" value="1"/>
</dbReference>
<dbReference type="PROSITE" id="PS00113">
    <property type="entry name" value="ADENYLATE_KINASE"/>
    <property type="match status" value="1"/>
</dbReference>